<organism>
    <name type="scientific">Caenorhabditis elegans</name>
    <dbReference type="NCBI Taxonomy" id="6239"/>
    <lineage>
        <taxon>Eukaryota</taxon>
        <taxon>Metazoa</taxon>
        <taxon>Ecdysozoa</taxon>
        <taxon>Nematoda</taxon>
        <taxon>Chromadorea</taxon>
        <taxon>Rhabditida</taxon>
        <taxon>Rhabditina</taxon>
        <taxon>Rhabditomorpha</taxon>
        <taxon>Rhabditoidea</taxon>
        <taxon>Rhabditidae</taxon>
        <taxon>Peloderinae</taxon>
        <taxon>Caenorhabditis</taxon>
    </lineage>
</organism>
<comment type="subcellular location">
    <subcellularLocation>
        <location evidence="4">Secreted</location>
    </subcellularLocation>
</comment>
<sequence length="639" mass="71489">MDLKSWILLSCTLLPLSVTSYECYVTPCTRDIIIVVDGSSSMQTSTYVSQEINMITKLTYSWTLDDAKVRLALVGAYLGNEFNGLDYFTDSSLIEKRLQSFRLAAMQYGLFSGDFNTTVRFLDERYVGPRATFGPRANVQKRIIIFSAHKGASDIASTKSKLQEFAQLGYAVTIVGIGVSEDVYKGTFYHKFVSVQWFELGVVAQSIIDTITEDGICFLDQGWTTPKQEICTTSTTTTRAPTTTTTVTTVKGVTGKPATTAKPVPPTHPPFPVGDYQDCSCTTQSLYIDIIFVIDVSEGMGQGGLMMVKAEINTLVGQMSLDPNIQKHVQVGLIKYSDKAEVVFKPSDYTNEDEFTEDLWSDPRLEDVDEKSDEVNLHLGLQQAAKMTASMRNGVRKVIVVYAASYNDEGNDDARQIAANIRETGYAIITVAFVEPESSNLVMKIGEIASPRMNFTSFRDDLLVEQMEDALCQVNCYCPNGWKQLVLENRKYGECFFPTKIDASWTASKFECPVLSKEHTGNGHLVYVNSELKNTFLNQFYMDNWYPENQENPNYDIGYYYDQATKKFIWVNGVTNNPYSNWATGHPDVKQGDCVMAKLLKDSKNDFRWNSVSCTSEYGRGLCQEAACDTDFYCAPSSN</sequence>
<proteinExistence type="inferred from homology"/>
<name>CL160_CAEEL</name>
<keyword id="KW-1015">Disulfide bond</keyword>
<keyword id="KW-0430">Lectin</keyword>
<keyword id="KW-1185">Reference proteome</keyword>
<keyword id="KW-0677">Repeat</keyword>
<keyword id="KW-0964">Secreted</keyword>
<keyword id="KW-0732">Signal</keyword>
<evidence type="ECO:0000255" key="1"/>
<evidence type="ECO:0000255" key="2">
    <source>
        <dbReference type="PROSITE-ProRule" id="PRU00040"/>
    </source>
</evidence>
<evidence type="ECO:0000255" key="3">
    <source>
        <dbReference type="PROSITE-ProRule" id="PRU00219"/>
    </source>
</evidence>
<evidence type="ECO:0000305" key="4"/>
<accession>P34393</accession>
<accession>Q8MNT5</accession>
<gene>
    <name type="primary">clec-160</name>
    <name type="ORF">F09G8.8</name>
</gene>
<reference key="1">
    <citation type="journal article" date="1994" name="Nature">
        <title>2.2 Mb of contiguous nucleotide sequence from chromosome III of C. elegans.</title>
        <authorList>
            <person name="Wilson R."/>
            <person name="Ainscough R."/>
            <person name="Anderson K."/>
            <person name="Baynes C."/>
            <person name="Berks M."/>
            <person name="Bonfield J."/>
            <person name="Burton J."/>
            <person name="Connell M."/>
            <person name="Copsey T."/>
            <person name="Cooper J."/>
            <person name="Coulson A."/>
            <person name="Craxton M."/>
            <person name="Dear S."/>
            <person name="Du Z."/>
            <person name="Durbin R."/>
            <person name="Favello A."/>
            <person name="Fraser A."/>
            <person name="Fulton L."/>
            <person name="Gardner A."/>
            <person name="Green P."/>
            <person name="Hawkins T."/>
            <person name="Hillier L."/>
            <person name="Jier M."/>
            <person name="Johnston L."/>
            <person name="Jones M."/>
            <person name="Kershaw J."/>
            <person name="Kirsten J."/>
            <person name="Laisster N."/>
            <person name="Latreille P."/>
            <person name="Lightning J."/>
            <person name="Lloyd C."/>
            <person name="Mortimore B."/>
            <person name="O'Callaghan M."/>
            <person name="Parsons J."/>
            <person name="Percy C."/>
            <person name="Rifken L."/>
            <person name="Roopra A."/>
            <person name="Saunders D."/>
            <person name="Shownkeen R."/>
            <person name="Sims M."/>
            <person name="Smaldon N."/>
            <person name="Smith A."/>
            <person name="Smith M."/>
            <person name="Sonnhammer E."/>
            <person name="Staden R."/>
            <person name="Sulston J."/>
            <person name="Thierry-Mieg J."/>
            <person name="Thomas K."/>
            <person name="Vaudin M."/>
            <person name="Vaughan K."/>
            <person name="Waterston R."/>
            <person name="Watson A."/>
            <person name="Weinstock L."/>
            <person name="Wilkinson-Sproat J."/>
            <person name="Wohldman P."/>
        </authorList>
    </citation>
    <scope>NUCLEOTIDE SEQUENCE [LARGE SCALE GENOMIC DNA]</scope>
    <source>
        <strain>Bristol N2</strain>
    </source>
</reference>
<reference key="2">
    <citation type="journal article" date="1998" name="Science">
        <title>Genome sequence of the nematode C. elegans: a platform for investigating biology.</title>
        <authorList>
            <consortium name="The C. elegans sequencing consortium"/>
        </authorList>
    </citation>
    <scope>NUCLEOTIDE SEQUENCE [LARGE SCALE GENOMIC DNA]</scope>
    <source>
        <strain>Bristol N2</strain>
    </source>
</reference>
<dbReference type="EMBL" id="FO080289">
    <property type="protein sequence ID" value="CCD62647.1"/>
    <property type="molecule type" value="Genomic_DNA"/>
</dbReference>
<dbReference type="PIR" id="S44792">
    <property type="entry name" value="S44792"/>
</dbReference>
<dbReference type="RefSeq" id="NP_498819.2">
    <property type="nucleotide sequence ID" value="NM_066418.8"/>
</dbReference>
<dbReference type="SMR" id="P34393"/>
<dbReference type="FunCoup" id="P34393">
    <property type="interactions" value="9"/>
</dbReference>
<dbReference type="STRING" id="6239.F09G8.8.1"/>
<dbReference type="PaxDb" id="6239-F09G8.8"/>
<dbReference type="PeptideAtlas" id="P34393"/>
<dbReference type="EnsemblMetazoa" id="F09G8.8.1">
    <property type="protein sequence ID" value="F09G8.8.1"/>
    <property type="gene ID" value="WBGene00017322"/>
</dbReference>
<dbReference type="GeneID" id="176167"/>
<dbReference type="KEGG" id="cel:CELE_F09G8.8"/>
<dbReference type="AGR" id="WB:WBGene00017322"/>
<dbReference type="CTD" id="176167"/>
<dbReference type="WormBase" id="F09G8.8">
    <property type="protein sequence ID" value="CE33579"/>
    <property type="gene ID" value="WBGene00017322"/>
    <property type="gene designation" value="clec-160"/>
</dbReference>
<dbReference type="eggNOG" id="ENOG502RWBE">
    <property type="taxonomic scope" value="Eukaryota"/>
</dbReference>
<dbReference type="HOGENOM" id="CLU_432965_0_0_1"/>
<dbReference type="InParanoid" id="P34393"/>
<dbReference type="OMA" id="GICFLDQ"/>
<dbReference type="OrthoDB" id="5859227at2759"/>
<dbReference type="PhylomeDB" id="P34393"/>
<dbReference type="PRO" id="PR:P34393"/>
<dbReference type="Proteomes" id="UP000001940">
    <property type="component" value="Chromosome III"/>
</dbReference>
<dbReference type="Bgee" id="WBGene00017322">
    <property type="expression patterns" value="Expressed in adult organism and 2 other cell types or tissues"/>
</dbReference>
<dbReference type="GO" id="GO:0005576">
    <property type="term" value="C:extracellular region"/>
    <property type="evidence" value="ECO:0007669"/>
    <property type="project" value="UniProtKB-SubCell"/>
</dbReference>
<dbReference type="GO" id="GO:0030246">
    <property type="term" value="F:carbohydrate binding"/>
    <property type="evidence" value="ECO:0007669"/>
    <property type="project" value="UniProtKB-KW"/>
</dbReference>
<dbReference type="CDD" id="cd00037">
    <property type="entry name" value="CLECT"/>
    <property type="match status" value="1"/>
</dbReference>
<dbReference type="CDD" id="cd00198">
    <property type="entry name" value="vWFA"/>
    <property type="match status" value="1"/>
</dbReference>
<dbReference type="Gene3D" id="3.10.100.10">
    <property type="entry name" value="Mannose-Binding Protein A, subunit A"/>
    <property type="match status" value="1"/>
</dbReference>
<dbReference type="Gene3D" id="3.40.50.410">
    <property type="entry name" value="von Willebrand factor, type A domain"/>
    <property type="match status" value="2"/>
</dbReference>
<dbReference type="InterPro" id="IPR001304">
    <property type="entry name" value="C-type_lectin-like"/>
</dbReference>
<dbReference type="InterPro" id="IPR016186">
    <property type="entry name" value="C-type_lectin-like/link_sf"/>
</dbReference>
<dbReference type="InterPro" id="IPR016187">
    <property type="entry name" value="CTDL_fold"/>
</dbReference>
<dbReference type="InterPro" id="IPR002035">
    <property type="entry name" value="VWF_A"/>
</dbReference>
<dbReference type="InterPro" id="IPR036465">
    <property type="entry name" value="vWFA_dom_sf"/>
</dbReference>
<dbReference type="PANTHER" id="PTHR31024">
    <property type="entry name" value="C-TYPE LECTIN"/>
    <property type="match status" value="1"/>
</dbReference>
<dbReference type="PANTHER" id="PTHR31024:SF13">
    <property type="entry name" value="C-TYPE LECTIN DOMAIN-CONTAINING PROTEIN 160"/>
    <property type="match status" value="1"/>
</dbReference>
<dbReference type="Pfam" id="PF00059">
    <property type="entry name" value="Lectin_C"/>
    <property type="match status" value="1"/>
</dbReference>
<dbReference type="Pfam" id="PF00092">
    <property type="entry name" value="VWA"/>
    <property type="match status" value="2"/>
</dbReference>
<dbReference type="PRINTS" id="PR00453">
    <property type="entry name" value="VWFADOMAIN"/>
</dbReference>
<dbReference type="SMART" id="SM00034">
    <property type="entry name" value="CLECT"/>
    <property type="match status" value="1"/>
</dbReference>
<dbReference type="SMART" id="SM00327">
    <property type="entry name" value="VWA"/>
    <property type="match status" value="2"/>
</dbReference>
<dbReference type="SUPFAM" id="SSF56436">
    <property type="entry name" value="C-type lectin-like"/>
    <property type="match status" value="1"/>
</dbReference>
<dbReference type="SUPFAM" id="SSF53300">
    <property type="entry name" value="vWA-like"/>
    <property type="match status" value="2"/>
</dbReference>
<dbReference type="PROSITE" id="PS50041">
    <property type="entry name" value="C_TYPE_LECTIN_2"/>
    <property type="match status" value="1"/>
</dbReference>
<dbReference type="PROSITE" id="PS50234">
    <property type="entry name" value="VWFA"/>
    <property type="match status" value="2"/>
</dbReference>
<feature type="signal peptide" evidence="1">
    <location>
        <begin position="1"/>
        <end position="19"/>
    </location>
</feature>
<feature type="chain" id="PRO_0000014280" description="C-type lectin domain-containing protein 160">
    <location>
        <begin position="20"/>
        <end position="639"/>
    </location>
</feature>
<feature type="domain" description="VWFA 1" evidence="3">
    <location>
        <begin position="31"/>
        <end position="178"/>
    </location>
</feature>
<feature type="domain" description="VWFA 2" evidence="3">
    <location>
        <begin position="289"/>
        <end position="474"/>
    </location>
</feature>
<feature type="domain" description="C-type lectin" evidence="2">
    <location>
        <begin position="491"/>
        <end position="618"/>
    </location>
</feature>
<feature type="disulfide bond" evidence="2">
    <location>
        <begin position="594"/>
        <end position="614"/>
    </location>
</feature>
<protein>
    <recommendedName>
        <fullName>C-type lectin domain-containing protein 160</fullName>
    </recommendedName>
</protein>